<feature type="chain" id="PRO_1000068324" description="Peptide methionine sulfoxide reductase MsrA">
    <location>
        <begin position="1"/>
        <end position="212"/>
    </location>
</feature>
<feature type="active site" evidence="1">
    <location>
        <position position="52"/>
    </location>
</feature>
<organism>
    <name type="scientific">Escherichia coli O139:H28 (strain E24377A / ETEC)</name>
    <dbReference type="NCBI Taxonomy" id="331111"/>
    <lineage>
        <taxon>Bacteria</taxon>
        <taxon>Pseudomonadati</taxon>
        <taxon>Pseudomonadota</taxon>
        <taxon>Gammaproteobacteria</taxon>
        <taxon>Enterobacterales</taxon>
        <taxon>Enterobacteriaceae</taxon>
        <taxon>Escherichia</taxon>
    </lineage>
</organism>
<keyword id="KW-0560">Oxidoreductase</keyword>
<keyword id="KW-1185">Reference proteome</keyword>
<accession>A7ZV98</accession>
<name>MSRA_ECO24</name>
<protein>
    <recommendedName>
        <fullName evidence="1">Peptide methionine sulfoxide reductase MsrA</fullName>
        <shortName evidence="1">Protein-methionine-S-oxide reductase</shortName>
        <ecNumber evidence="1">1.8.4.11</ecNumber>
    </recommendedName>
    <alternativeName>
        <fullName evidence="1">Peptide-methionine (S)-S-oxide reductase</fullName>
        <shortName evidence="1">Peptide Met(O) reductase</shortName>
    </alternativeName>
</protein>
<reference key="1">
    <citation type="journal article" date="2008" name="J. Bacteriol.">
        <title>The pangenome structure of Escherichia coli: comparative genomic analysis of E. coli commensal and pathogenic isolates.</title>
        <authorList>
            <person name="Rasko D.A."/>
            <person name="Rosovitz M.J."/>
            <person name="Myers G.S.A."/>
            <person name="Mongodin E.F."/>
            <person name="Fricke W.F."/>
            <person name="Gajer P."/>
            <person name="Crabtree J."/>
            <person name="Sebaihia M."/>
            <person name="Thomson N.R."/>
            <person name="Chaudhuri R."/>
            <person name="Henderson I.R."/>
            <person name="Sperandio V."/>
            <person name="Ravel J."/>
        </authorList>
    </citation>
    <scope>NUCLEOTIDE SEQUENCE [LARGE SCALE GENOMIC DNA]</scope>
    <source>
        <strain>E24377A / ETEC</strain>
    </source>
</reference>
<dbReference type="EC" id="1.8.4.11" evidence="1"/>
<dbReference type="EMBL" id="CP000800">
    <property type="protein sequence ID" value="ABV20069.1"/>
    <property type="molecule type" value="Genomic_DNA"/>
</dbReference>
<dbReference type="RefSeq" id="WP_001295196.1">
    <property type="nucleotide sequence ID" value="NC_009801.1"/>
</dbReference>
<dbReference type="BMRB" id="A7ZV98"/>
<dbReference type="SMR" id="A7ZV98"/>
<dbReference type="GeneID" id="93777602"/>
<dbReference type="KEGG" id="ecw:EcE24377A_4789"/>
<dbReference type="HOGENOM" id="CLU_031040_10_3_6"/>
<dbReference type="Proteomes" id="UP000001122">
    <property type="component" value="Chromosome"/>
</dbReference>
<dbReference type="GO" id="GO:0005737">
    <property type="term" value="C:cytoplasm"/>
    <property type="evidence" value="ECO:0007669"/>
    <property type="project" value="TreeGrafter"/>
</dbReference>
<dbReference type="GO" id="GO:0036456">
    <property type="term" value="F:L-methionine-(S)-S-oxide reductase activity"/>
    <property type="evidence" value="ECO:0007669"/>
    <property type="project" value="TreeGrafter"/>
</dbReference>
<dbReference type="GO" id="GO:0008113">
    <property type="term" value="F:peptide-methionine (S)-S-oxide reductase activity"/>
    <property type="evidence" value="ECO:0007669"/>
    <property type="project" value="UniProtKB-UniRule"/>
</dbReference>
<dbReference type="GO" id="GO:0034599">
    <property type="term" value="P:cellular response to oxidative stress"/>
    <property type="evidence" value="ECO:0007669"/>
    <property type="project" value="TreeGrafter"/>
</dbReference>
<dbReference type="GO" id="GO:0036211">
    <property type="term" value="P:protein modification process"/>
    <property type="evidence" value="ECO:0007669"/>
    <property type="project" value="UniProtKB-UniRule"/>
</dbReference>
<dbReference type="FunFam" id="3.30.1060.10:FF:000001">
    <property type="entry name" value="Peptide methionine sulfoxide reductase MsrA"/>
    <property type="match status" value="1"/>
</dbReference>
<dbReference type="Gene3D" id="3.30.1060.10">
    <property type="entry name" value="Peptide methionine sulphoxide reductase MsrA"/>
    <property type="match status" value="1"/>
</dbReference>
<dbReference type="HAMAP" id="MF_01401">
    <property type="entry name" value="MsrA"/>
    <property type="match status" value="1"/>
</dbReference>
<dbReference type="InterPro" id="IPR002569">
    <property type="entry name" value="Met_Sox_Rdtase_MsrA_dom"/>
</dbReference>
<dbReference type="InterPro" id="IPR036509">
    <property type="entry name" value="Met_Sox_Rdtase_MsrA_sf"/>
</dbReference>
<dbReference type="InterPro" id="IPR050162">
    <property type="entry name" value="MsrA_MetSO_reductase"/>
</dbReference>
<dbReference type="NCBIfam" id="TIGR00401">
    <property type="entry name" value="msrA"/>
    <property type="match status" value="1"/>
</dbReference>
<dbReference type="PANTHER" id="PTHR42799">
    <property type="entry name" value="MITOCHONDRIAL PEPTIDE METHIONINE SULFOXIDE REDUCTASE"/>
    <property type="match status" value="1"/>
</dbReference>
<dbReference type="PANTHER" id="PTHR42799:SF2">
    <property type="entry name" value="MITOCHONDRIAL PEPTIDE METHIONINE SULFOXIDE REDUCTASE"/>
    <property type="match status" value="1"/>
</dbReference>
<dbReference type="Pfam" id="PF01625">
    <property type="entry name" value="PMSR"/>
    <property type="match status" value="1"/>
</dbReference>
<dbReference type="SUPFAM" id="SSF55068">
    <property type="entry name" value="Peptide methionine sulfoxide reductase"/>
    <property type="match status" value="1"/>
</dbReference>
<sequence length="212" mass="23315">MSLFDKKHLVSPADALPGRNTPMPVATLHAVNGHSMTNVPDGMEIAIFAMGCFWGVERLFWQLPGVYSTAAGYTGGYTPNPTYREVCSGDTGHAEAVRIVYDPSVISYEQLLQVFWENHDPAQGMRQGNDHGTQYRSAIYPLTPEQDAAARASLERFQAAMLAADDDRHITTEIANATPFYYAEDDHQQYLHKNPYGYCGIGGIGVCLPPEA</sequence>
<proteinExistence type="inferred from homology"/>
<gene>
    <name evidence="1" type="primary">msrA</name>
    <name type="ordered locus">EcE24377A_4789</name>
</gene>
<comment type="function">
    <text evidence="1">Has an important function as a repair enzyme for proteins that have been inactivated by oxidation. Catalyzes the reversible oxidation-reduction of methionine sulfoxide in proteins to methionine.</text>
</comment>
<comment type="catalytic activity">
    <reaction evidence="1">
        <text>L-methionyl-[protein] + [thioredoxin]-disulfide + H2O = L-methionyl-(S)-S-oxide-[protein] + [thioredoxin]-dithiol</text>
        <dbReference type="Rhea" id="RHEA:14217"/>
        <dbReference type="Rhea" id="RHEA-COMP:10698"/>
        <dbReference type="Rhea" id="RHEA-COMP:10700"/>
        <dbReference type="Rhea" id="RHEA-COMP:12313"/>
        <dbReference type="Rhea" id="RHEA-COMP:12315"/>
        <dbReference type="ChEBI" id="CHEBI:15377"/>
        <dbReference type="ChEBI" id="CHEBI:16044"/>
        <dbReference type="ChEBI" id="CHEBI:29950"/>
        <dbReference type="ChEBI" id="CHEBI:44120"/>
        <dbReference type="ChEBI" id="CHEBI:50058"/>
        <dbReference type="EC" id="1.8.4.11"/>
    </reaction>
</comment>
<comment type="catalytic activity">
    <reaction evidence="1">
        <text>[thioredoxin]-disulfide + L-methionine + H2O = L-methionine (S)-S-oxide + [thioredoxin]-dithiol</text>
        <dbReference type="Rhea" id="RHEA:19993"/>
        <dbReference type="Rhea" id="RHEA-COMP:10698"/>
        <dbReference type="Rhea" id="RHEA-COMP:10700"/>
        <dbReference type="ChEBI" id="CHEBI:15377"/>
        <dbReference type="ChEBI" id="CHEBI:29950"/>
        <dbReference type="ChEBI" id="CHEBI:50058"/>
        <dbReference type="ChEBI" id="CHEBI:57844"/>
        <dbReference type="ChEBI" id="CHEBI:58772"/>
        <dbReference type="EC" id="1.8.4.11"/>
    </reaction>
</comment>
<comment type="similarity">
    <text evidence="1">Belongs to the MsrA Met sulfoxide reductase family.</text>
</comment>
<evidence type="ECO:0000255" key="1">
    <source>
        <dbReference type="HAMAP-Rule" id="MF_01401"/>
    </source>
</evidence>